<name>TTCA_ECO81</name>
<proteinExistence type="inferred from homology"/>
<accession>B7MUI7</accession>
<gene>
    <name evidence="1" type="primary">ttcA</name>
    <name type="ordered locus">ECED1_1555</name>
</gene>
<dbReference type="EC" id="2.8.1.-" evidence="1"/>
<dbReference type="EMBL" id="CU928162">
    <property type="protein sequence ID" value="CAR07753.2"/>
    <property type="molecule type" value="Genomic_DNA"/>
</dbReference>
<dbReference type="RefSeq" id="WP_001157412.1">
    <property type="nucleotide sequence ID" value="NC_011745.1"/>
</dbReference>
<dbReference type="SMR" id="B7MUI7"/>
<dbReference type="KEGG" id="ecq:ECED1_1555"/>
<dbReference type="HOGENOM" id="CLU_026481_0_0_6"/>
<dbReference type="Proteomes" id="UP000000748">
    <property type="component" value="Chromosome"/>
</dbReference>
<dbReference type="GO" id="GO:0005737">
    <property type="term" value="C:cytoplasm"/>
    <property type="evidence" value="ECO:0007669"/>
    <property type="project" value="UniProtKB-SubCell"/>
</dbReference>
<dbReference type="GO" id="GO:0051539">
    <property type="term" value="F:4 iron, 4 sulfur cluster binding"/>
    <property type="evidence" value="ECO:0007669"/>
    <property type="project" value="UniProtKB-UniRule"/>
</dbReference>
<dbReference type="GO" id="GO:0005524">
    <property type="term" value="F:ATP binding"/>
    <property type="evidence" value="ECO:0007669"/>
    <property type="project" value="UniProtKB-UniRule"/>
</dbReference>
<dbReference type="GO" id="GO:0000287">
    <property type="term" value="F:magnesium ion binding"/>
    <property type="evidence" value="ECO:0007669"/>
    <property type="project" value="UniProtKB-UniRule"/>
</dbReference>
<dbReference type="GO" id="GO:0016783">
    <property type="term" value="F:sulfurtransferase activity"/>
    <property type="evidence" value="ECO:0007669"/>
    <property type="project" value="UniProtKB-UniRule"/>
</dbReference>
<dbReference type="GO" id="GO:0000049">
    <property type="term" value="F:tRNA binding"/>
    <property type="evidence" value="ECO:0007669"/>
    <property type="project" value="UniProtKB-KW"/>
</dbReference>
<dbReference type="GO" id="GO:0034227">
    <property type="term" value="P:tRNA thio-modification"/>
    <property type="evidence" value="ECO:0007669"/>
    <property type="project" value="UniProtKB-UniRule"/>
</dbReference>
<dbReference type="CDD" id="cd24138">
    <property type="entry name" value="TtcA-like"/>
    <property type="match status" value="1"/>
</dbReference>
<dbReference type="FunFam" id="3.40.50.620:FF:000046">
    <property type="entry name" value="tRNA-cytidine(32) 2-sulfurtransferase"/>
    <property type="match status" value="1"/>
</dbReference>
<dbReference type="Gene3D" id="3.40.50.620">
    <property type="entry name" value="HUPs"/>
    <property type="match status" value="1"/>
</dbReference>
<dbReference type="HAMAP" id="MF_01850">
    <property type="entry name" value="TtcA"/>
    <property type="match status" value="1"/>
</dbReference>
<dbReference type="InterPro" id="IPR014729">
    <property type="entry name" value="Rossmann-like_a/b/a_fold"/>
</dbReference>
<dbReference type="InterPro" id="IPR011063">
    <property type="entry name" value="TilS/TtcA_N"/>
</dbReference>
<dbReference type="InterPro" id="IPR012089">
    <property type="entry name" value="tRNA_Cyd_32_2_STrfase"/>
</dbReference>
<dbReference type="InterPro" id="IPR035107">
    <property type="entry name" value="tRNA_thiolation_TtcA_Ctu1"/>
</dbReference>
<dbReference type="NCBIfam" id="NF007972">
    <property type="entry name" value="PRK10696.1"/>
    <property type="match status" value="1"/>
</dbReference>
<dbReference type="PANTHER" id="PTHR43686:SF1">
    <property type="entry name" value="AMINOTRAN_5 DOMAIN-CONTAINING PROTEIN"/>
    <property type="match status" value="1"/>
</dbReference>
<dbReference type="PANTHER" id="PTHR43686">
    <property type="entry name" value="SULFURTRANSFERASE-RELATED"/>
    <property type="match status" value="1"/>
</dbReference>
<dbReference type="Pfam" id="PF01171">
    <property type="entry name" value="ATP_bind_3"/>
    <property type="match status" value="1"/>
</dbReference>
<dbReference type="PIRSF" id="PIRSF004976">
    <property type="entry name" value="ATPase_YdaO"/>
    <property type="match status" value="1"/>
</dbReference>
<dbReference type="SUPFAM" id="SSF52402">
    <property type="entry name" value="Adenine nucleotide alpha hydrolases-like"/>
    <property type="match status" value="1"/>
</dbReference>
<organism>
    <name type="scientific">Escherichia coli O81 (strain ED1a)</name>
    <dbReference type="NCBI Taxonomy" id="585397"/>
    <lineage>
        <taxon>Bacteria</taxon>
        <taxon>Pseudomonadati</taxon>
        <taxon>Pseudomonadota</taxon>
        <taxon>Gammaproteobacteria</taxon>
        <taxon>Enterobacterales</taxon>
        <taxon>Enterobacteriaceae</taxon>
        <taxon>Escherichia</taxon>
    </lineage>
</organism>
<feature type="chain" id="PRO_1000188638" description="tRNA-cytidine(32) 2-sulfurtransferase">
    <location>
        <begin position="1"/>
        <end position="311"/>
    </location>
</feature>
<feature type="short sequence motif" description="PP-loop motif" evidence="1">
    <location>
        <begin position="47"/>
        <end position="52"/>
    </location>
</feature>
<feature type="binding site" evidence="1">
    <location>
        <position position="122"/>
    </location>
    <ligand>
        <name>[4Fe-4S] cluster</name>
        <dbReference type="ChEBI" id="CHEBI:49883"/>
    </ligand>
</feature>
<feature type="binding site" evidence="1">
    <location>
        <position position="125"/>
    </location>
    <ligand>
        <name>[4Fe-4S] cluster</name>
        <dbReference type="ChEBI" id="CHEBI:49883"/>
    </ligand>
</feature>
<feature type="binding site" evidence="1">
    <location>
        <position position="213"/>
    </location>
    <ligand>
        <name>[4Fe-4S] cluster</name>
        <dbReference type="ChEBI" id="CHEBI:49883"/>
    </ligand>
</feature>
<reference key="1">
    <citation type="journal article" date="2009" name="PLoS Genet.">
        <title>Organised genome dynamics in the Escherichia coli species results in highly diverse adaptive paths.</title>
        <authorList>
            <person name="Touchon M."/>
            <person name="Hoede C."/>
            <person name="Tenaillon O."/>
            <person name="Barbe V."/>
            <person name="Baeriswyl S."/>
            <person name="Bidet P."/>
            <person name="Bingen E."/>
            <person name="Bonacorsi S."/>
            <person name="Bouchier C."/>
            <person name="Bouvet O."/>
            <person name="Calteau A."/>
            <person name="Chiapello H."/>
            <person name="Clermont O."/>
            <person name="Cruveiller S."/>
            <person name="Danchin A."/>
            <person name="Diard M."/>
            <person name="Dossat C."/>
            <person name="Karoui M.E."/>
            <person name="Frapy E."/>
            <person name="Garry L."/>
            <person name="Ghigo J.M."/>
            <person name="Gilles A.M."/>
            <person name="Johnson J."/>
            <person name="Le Bouguenec C."/>
            <person name="Lescat M."/>
            <person name="Mangenot S."/>
            <person name="Martinez-Jehanne V."/>
            <person name="Matic I."/>
            <person name="Nassif X."/>
            <person name="Oztas S."/>
            <person name="Petit M.A."/>
            <person name="Pichon C."/>
            <person name="Rouy Z."/>
            <person name="Ruf C.S."/>
            <person name="Schneider D."/>
            <person name="Tourret J."/>
            <person name="Vacherie B."/>
            <person name="Vallenet D."/>
            <person name="Medigue C."/>
            <person name="Rocha E.P.C."/>
            <person name="Denamur E."/>
        </authorList>
    </citation>
    <scope>NUCLEOTIDE SEQUENCE [LARGE SCALE GENOMIC DNA]</scope>
    <source>
        <strain>ED1a</strain>
    </source>
</reference>
<protein>
    <recommendedName>
        <fullName evidence="1">tRNA-cytidine(32) 2-sulfurtransferase</fullName>
        <ecNumber evidence="1">2.8.1.-</ecNumber>
    </recommendedName>
    <alternativeName>
        <fullName evidence="1">Two-thiocytidine biosynthesis protein A</fullName>
    </alternativeName>
    <alternativeName>
        <fullName evidence="1">tRNA 2-thiocytidine biosynthesis protein TtcA</fullName>
    </alternativeName>
</protein>
<sequence>MQENQQITKKEQYNLNKLQKRLRRNVGEAIADFNMIEEGDRIMVCLSGGKDSYTMLEILRNLQQSAPINFSLVAVNLDQKQPGFPEHVLPEYLETLGVEYKIVEENTYGIVKEKIPEGKTTCSLCSRLRRGILYRTATELGATKIALGHHRDDILQTLFLNMFYGGKMKGMPPKLMSDDGKHIVIRPLAYCREKDIQRFADAKAFPIIPCNLCGSQPNLQRQVIADMLRDWDKRYPGRIETMFSAMQNVVPSHLCDTNLFDFKGITHGSEVVNGGDLAFDREEIPLQPAGWQPEEDENQLDELRLNVVEVK</sequence>
<keyword id="KW-0004">4Fe-4S</keyword>
<keyword id="KW-0067">ATP-binding</keyword>
<keyword id="KW-0963">Cytoplasm</keyword>
<keyword id="KW-0408">Iron</keyword>
<keyword id="KW-0411">Iron-sulfur</keyword>
<keyword id="KW-0460">Magnesium</keyword>
<keyword id="KW-0479">Metal-binding</keyword>
<keyword id="KW-0547">Nucleotide-binding</keyword>
<keyword id="KW-0694">RNA-binding</keyword>
<keyword id="KW-0808">Transferase</keyword>
<keyword id="KW-0819">tRNA processing</keyword>
<keyword id="KW-0820">tRNA-binding</keyword>
<comment type="function">
    <text evidence="1">Catalyzes the ATP-dependent 2-thiolation of cytidine in position 32 of tRNA, to form 2-thiocytidine (s(2)C32). The sulfur atoms are provided by the cysteine/cysteine desulfurase (IscS) system.</text>
</comment>
<comment type="catalytic activity">
    <reaction evidence="1">
        <text>cytidine(32) in tRNA + S-sulfanyl-L-cysteinyl-[cysteine desulfurase] + AH2 + ATP = 2-thiocytidine(32) in tRNA + L-cysteinyl-[cysteine desulfurase] + A + AMP + diphosphate + H(+)</text>
        <dbReference type="Rhea" id="RHEA:57048"/>
        <dbReference type="Rhea" id="RHEA-COMP:10288"/>
        <dbReference type="Rhea" id="RHEA-COMP:12157"/>
        <dbReference type="Rhea" id="RHEA-COMP:12158"/>
        <dbReference type="Rhea" id="RHEA-COMP:14821"/>
        <dbReference type="ChEBI" id="CHEBI:13193"/>
        <dbReference type="ChEBI" id="CHEBI:15378"/>
        <dbReference type="ChEBI" id="CHEBI:17499"/>
        <dbReference type="ChEBI" id="CHEBI:29950"/>
        <dbReference type="ChEBI" id="CHEBI:30616"/>
        <dbReference type="ChEBI" id="CHEBI:33019"/>
        <dbReference type="ChEBI" id="CHEBI:61963"/>
        <dbReference type="ChEBI" id="CHEBI:82748"/>
        <dbReference type="ChEBI" id="CHEBI:141453"/>
        <dbReference type="ChEBI" id="CHEBI:456215"/>
    </reaction>
    <physiologicalReaction direction="left-to-right" evidence="1">
        <dbReference type="Rhea" id="RHEA:57049"/>
    </physiologicalReaction>
</comment>
<comment type="cofactor">
    <cofactor evidence="1">
        <name>Mg(2+)</name>
        <dbReference type="ChEBI" id="CHEBI:18420"/>
    </cofactor>
</comment>
<comment type="cofactor">
    <cofactor evidence="1">
        <name>[4Fe-4S] cluster</name>
        <dbReference type="ChEBI" id="CHEBI:49883"/>
    </cofactor>
    <text evidence="1">Binds 1 [4Fe-4S] cluster per subunit. The cluster is chelated by three Cys residues, the fourth Fe has a free coordination site that may bind a sulfur atom transferred from the persulfide of IscS.</text>
</comment>
<comment type="pathway">
    <text evidence="1">tRNA modification.</text>
</comment>
<comment type="subunit">
    <text evidence="1">Homodimer.</text>
</comment>
<comment type="subcellular location">
    <subcellularLocation>
        <location evidence="1">Cytoplasm</location>
    </subcellularLocation>
</comment>
<comment type="miscellaneous">
    <text evidence="1">The thiolation reaction likely consists of two steps: a first activation step by ATP to form an adenylated intermediate of the target base of tRNA, and a second nucleophilic substitution step of the sulfur (S) atom supplied by the hydrosulfide attached to the Fe-S cluster.</text>
</comment>
<comment type="similarity">
    <text evidence="1">Belongs to the TtcA family.</text>
</comment>
<evidence type="ECO:0000255" key="1">
    <source>
        <dbReference type="HAMAP-Rule" id="MF_01850"/>
    </source>
</evidence>